<proteinExistence type="inferred from homology"/>
<gene>
    <name evidence="1" type="primary">trpD</name>
    <name type="ordered locus">Pisl_1915</name>
</gene>
<comment type="function">
    <text evidence="1">Catalyzes the transfer of the phosphoribosyl group of 5-phosphorylribose-1-pyrophosphate (PRPP) to anthranilate to yield N-(5'-phosphoribosyl)-anthranilate (PRA).</text>
</comment>
<comment type="catalytic activity">
    <reaction evidence="1">
        <text>N-(5-phospho-beta-D-ribosyl)anthranilate + diphosphate = 5-phospho-alpha-D-ribose 1-diphosphate + anthranilate</text>
        <dbReference type="Rhea" id="RHEA:11768"/>
        <dbReference type="ChEBI" id="CHEBI:16567"/>
        <dbReference type="ChEBI" id="CHEBI:18277"/>
        <dbReference type="ChEBI" id="CHEBI:33019"/>
        <dbReference type="ChEBI" id="CHEBI:58017"/>
        <dbReference type="EC" id="2.4.2.18"/>
    </reaction>
</comment>
<comment type="cofactor">
    <cofactor evidence="1">
        <name>Mg(2+)</name>
        <dbReference type="ChEBI" id="CHEBI:18420"/>
    </cofactor>
    <text evidence="1">Binds 2 magnesium ions per monomer.</text>
</comment>
<comment type="pathway">
    <text evidence="1">Amino-acid biosynthesis; L-tryptophan biosynthesis; L-tryptophan from chorismate: step 2/5.</text>
</comment>
<comment type="subunit">
    <text evidence="1">Homodimer.</text>
</comment>
<comment type="similarity">
    <text evidence="1">Belongs to the anthranilate phosphoribosyltransferase family.</text>
</comment>
<keyword id="KW-0028">Amino-acid biosynthesis</keyword>
<keyword id="KW-0057">Aromatic amino acid biosynthesis</keyword>
<keyword id="KW-0328">Glycosyltransferase</keyword>
<keyword id="KW-0460">Magnesium</keyword>
<keyword id="KW-0479">Metal-binding</keyword>
<keyword id="KW-0808">Transferase</keyword>
<keyword id="KW-0822">Tryptophan biosynthesis</keyword>
<reference key="1">
    <citation type="submission" date="2006-12" db="EMBL/GenBank/DDBJ databases">
        <title>Complete sequence of Pyrobaculum islandicum DSM 4184.</title>
        <authorList>
            <person name="Copeland A."/>
            <person name="Lucas S."/>
            <person name="Lapidus A."/>
            <person name="Barry K."/>
            <person name="Detter J.C."/>
            <person name="Glavina del Rio T."/>
            <person name="Dalin E."/>
            <person name="Tice H."/>
            <person name="Pitluck S."/>
            <person name="Meincke L."/>
            <person name="Brettin T."/>
            <person name="Bruce D."/>
            <person name="Han C."/>
            <person name="Tapia R."/>
            <person name="Gilna P."/>
            <person name="Schmutz J."/>
            <person name="Larimer F."/>
            <person name="Land M."/>
            <person name="Hauser L."/>
            <person name="Kyrpides N."/>
            <person name="Mikhailova N."/>
            <person name="Cozen A.E."/>
            <person name="Fitz-Gibbon S.T."/>
            <person name="House C.H."/>
            <person name="Saltikov C."/>
            <person name="Lowe T."/>
            <person name="Richardson P."/>
        </authorList>
    </citation>
    <scope>NUCLEOTIDE SEQUENCE [LARGE SCALE GENOMIC DNA]</scope>
    <source>
        <strain>DSM 4184 / JCM 9189 / GEO3</strain>
    </source>
</reference>
<protein>
    <recommendedName>
        <fullName evidence="1">Anthranilate phosphoribosyltransferase</fullName>
        <ecNumber evidence="1">2.4.2.18</ecNumber>
    </recommendedName>
</protein>
<name>TRPD_PYRIL</name>
<evidence type="ECO:0000255" key="1">
    <source>
        <dbReference type="HAMAP-Rule" id="MF_00211"/>
    </source>
</evidence>
<sequence length="329" mass="34741">MVNILKKLANGVSLNIDEAYLLSREILSGGLNDVAVAAALTAMRCRGETAEEVTGFVKSAREVAVKVPLRVEAIDTAGTGGDGAGTINLSTLAAVVAAAAGARVLKHGNRSASGFFGSADFMEAVGYNLEVGPEKAAEMVEKIGFAFVFAPRYHPAFAKVAPVRRQLPFRTVFNIVGPLANPGLVKRQLIGVSERRLLDVVGGVASVLLDRALVVYGSGVDEVSTEGPTEVVEVRGGRAERYVLEPEDFGIGKTPLPRASTREEAVGLALAGLRGEHREAEIAIAVNAAAALYVAEVVRDFRDGFELAVKTIREGAAYRKLREAVEASR</sequence>
<feature type="chain" id="PRO_0000325483" description="Anthranilate phosphoribosyltransferase">
    <location>
        <begin position="1"/>
        <end position="329"/>
    </location>
</feature>
<feature type="binding site" evidence="1">
    <location>
        <position position="78"/>
    </location>
    <ligand>
        <name>5-phospho-alpha-D-ribose 1-diphosphate</name>
        <dbReference type="ChEBI" id="CHEBI:58017"/>
    </ligand>
</feature>
<feature type="binding site" evidence="1">
    <location>
        <position position="78"/>
    </location>
    <ligand>
        <name>anthranilate</name>
        <dbReference type="ChEBI" id="CHEBI:16567"/>
        <label>1</label>
    </ligand>
</feature>
<feature type="binding site" evidence="1">
    <location>
        <begin position="81"/>
        <end position="82"/>
    </location>
    <ligand>
        <name>5-phospho-alpha-D-ribose 1-diphosphate</name>
        <dbReference type="ChEBI" id="CHEBI:58017"/>
    </ligand>
</feature>
<feature type="binding site" evidence="1">
    <location>
        <position position="86"/>
    </location>
    <ligand>
        <name>5-phospho-alpha-D-ribose 1-diphosphate</name>
        <dbReference type="ChEBI" id="CHEBI:58017"/>
    </ligand>
</feature>
<feature type="binding site" evidence="1">
    <location>
        <begin position="88"/>
        <end position="91"/>
    </location>
    <ligand>
        <name>5-phospho-alpha-D-ribose 1-diphosphate</name>
        <dbReference type="ChEBI" id="CHEBI:58017"/>
    </ligand>
</feature>
<feature type="binding site" evidence="1">
    <location>
        <position position="90"/>
    </location>
    <ligand>
        <name>Mg(2+)</name>
        <dbReference type="ChEBI" id="CHEBI:18420"/>
        <label>1</label>
    </ligand>
</feature>
<feature type="binding site" evidence="1">
    <location>
        <begin position="106"/>
        <end position="114"/>
    </location>
    <ligand>
        <name>5-phospho-alpha-D-ribose 1-diphosphate</name>
        <dbReference type="ChEBI" id="CHEBI:58017"/>
    </ligand>
</feature>
<feature type="binding site" evidence="1">
    <location>
        <position position="109"/>
    </location>
    <ligand>
        <name>anthranilate</name>
        <dbReference type="ChEBI" id="CHEBI:16567"/>
        <label>1</label>
    </ligand>
</feature>
<feature type="binding site" evidence="1">
    <location>
        <position position="118"/>
    </location>
    <ligand>
        <name>5-phospho-alpha-D-ribose 1-diphosphate</name>
        <dbReference type="ChEBI" id="CHEBI:58017"/>
    </ligand>
</feature>
<feature type="binding site" evidence="1">
    <location>
        <position position="164"/>
    </location>
    <ligand>
        <name>anthranilate</name>
        <dbReference type="ChEBI" id="CHEBI:16567"/>
        <label>2</label>
    </ligand>
</feature>
<feature type="binding site" evidence="1">
    <location>
        <position position="221"/>
    </location>
    <ligand>
        <name>Mg(2+)</name>
        <dbReference type="ChEBI" id="CHEBI:18420"/>
        <label>2</label>
    </ligand>
</feature>
<feature type="binding site" evidence="1">
    <location>
        <position position="222"/>
    </location>
    <ligand>
        <name>Mg(2+)</name>
        <dbReference type="ChEBI" id="CHEBI:18420"/>
        <label>1</label>
    </ligand>
</feature>
<feature type="binding site" evidence="1">
    <location>
        <position position="222"/>
    </location>
    <ligand>
        <name>Mg(2+)</name>
        <dbReference type="ChEBI" id="CHEBI:18420"/>
        <label>2</label>
    </ligand>
</feature>
<dbReference type="EC" id="2.4.2.18" evidence="1"/>
<dbReference type="EMBL" id="CP000504">
    <property type="protein sequence ID" value="ABL89062.1"/>
    <property type="molecule type" value="Genomic_DNA"/>
</dbReference>
<dbReference type="RefSeq" id="WP_011763637.1">
    <property type="nucleotide sequence ID" value="NC_008701.1"/>
</dbReference>
<dbReference type="SMR" id="A1RVT0"/>
<dbReference type="STRING" id="384616.Pisl_1915"/>
<dbReference type="GeneID" id="4618133"/>
<dbReference type="KEGG" id="pis:Pisl_1915"/>
<dbReference type="eggNOG" id="arCOG02012">
    <property type="taxonomic scope" value="Archaea"/>
</dbReference>
<dbReference type="HOGENOM" id="CLU_034315_2_1_2"/>
<dbReference type="OrthoDB" id="8214at2157"/>
<dbReference type="UniPathway" id="UPA00035">
    <property type="reaction ID" value="UER00041"/>
</dbReference>
<dbReference type="Proteomes" id="UP000002595">
    <property type="component" value="Chromosome"/>
</dbReference>
<dbReference type="GO" id="GO:0005829">
    <property type="term" value="C:cytosol"/>
    <property type="evidence" value="ECO:0007669"/>
    <property type="project" value="TreeGrafter"/>
</dbReference>
<dbReference type="GO" id="GO:0004048">
    <property type="term" value="F:anthranilate phosphoribosyltransferase activity"/>
    <property type="evidence" value="ECO:0007669"/>
    <property type="project" value="UniProtKB-UniRule"/>
</dbReference>
<dbReference type="GO" id="GO:0000287">
    <property type="term" value="F:magnesium ion binding"/>
    <property type="evidence" value="ECO:0007669"/>
    <property type="project" value="UniProtKB-UniRule"/>
</dbReference>
<dbReference type="GO" id="GO:0000162">
    <property type="term" value="P:L-tryptophan biosynthetic process"/>
    <property type="evidence" value="ECO:0007669"/>
    <property type="project" value="UniProtKB-UniRule"/>
</dbReference>
<dbReference type="Gene3D" id="3.40.1030.10">
    <property type="entry name" value="Nucleoside phosphorylase/phosphoribosyltransferase catalytic domain"/>
    <property type="match status" value="1"/>
</dbReference>
<dbReference type="Gene3D" id="1.20.970.10">
    <property type="entry name" value="Transferase, Pyrimidine Nucleoside Phosphorylase, Chain C"/>
    <property type="match status" value="1"/>
</dbReference>
<dbReference type="HAMAP" id="MF_00211">
    <property type="entry name" value="TrpD"/>
    <property type="match status" value="1"/>
</dbReference>
<dbReference type="InterPro" id="IPR005940">
    <property type="entry name" value="Anthranilate_Pribosyl_Tfrase"/>
</dbReference>
<dbReference type="InterPro" id="IPR000312">
    <property type="entry name" value="Glycosyl_Trfase_fam3"/>
</dbReference>
<dbReference type="InterPro" id="IPR017459">
    <property type="entry name" value="Glycosyl_Trfase_fam3_N_dom"/>
</dbReference>
<dbReference type="InterPro" id="IPR036320">
    <property type="entry name" value="Glycosyl_Trfase_fam3_N_dom_sf"/>
</dbReference>
<dbReference type="InterPro" id="IPR035902">
    <property type="entry name" value="Nuc_phospho_transferase"/>
</dbReference>
<dbReference type="NCBIfam" id="TIGR01245">
    <property type="entry name" value="trpD"/>
    <property type="match status" value="1"/>
</dbReference>
<dbReference type="PANTHER" id="PTHR43285">
    <property type="entry name" value="ANTHRANILATE PHOSPHORIBOSYLTRANSFERASE"/>
    <property type="match status" value="1"/>
</dbReference>
<dbReference type="PANTHER" id="PTHR43285:SF2">
    <property type="entry name" value="ANTHRANILATE PHOSPHORIBOSYLTRANSFERASE"/>
    <property type="match status" value="1"/>
</dbReference>
<dbReference type="Pfam" id="PF02885">
    <property type="entry name" value="Glycos_trans_3N"/>
    <property type="match status" value="1"/>
</dbReference>
<dbReference type="Pfam" id="PF00591">
    <property type="entry name" value="Glycos_transf_3"/>
    <property type="match status" value="1"/>
</dbReference>
<dbReference type="SUPFAM" id="SSF52418">
    <property type="entry name" value="Nucleoside phosphorylase/phosphoribosyltransferase catalytic domain"/>
    <property type="match status" value="1"/>
</dbReference>
<dbReference type="SUPFAM" id="SSF47648">
    <property type="entry name" value="Nucleoside phosphorylase/phosphoribosyltransferase N-terminal domain"/>
    <property type="match status" value="1"/>
</dbReference>
<accession>A1RVT0</accession>
<organism>
    <name type="scientific">Pyrobaculum islandicum (strain DSM 4184 / JCM 9189 / GEO3)</name>
    <dbReference type="NCBI Taxonomy" id="384616"/>
    <lineage>
        <taxon>Archaea</taxon>
        <taxon>Thermoproteota</taxon>
        <taxon>Thermoprotei</taxon>
        <taxon>Thermoproteales</taxon>
        <taxon>Thermoproteaceae</taxon>
        <taxon>Pyrobaculum</taxon>
    </lineage>
</organism>